<protein>
    <recommendedName>
        <fullName evidence="1">Pyrokinin-5</fullName>
    </recommendedName>
    <alternativeName>
        <fullName evidence="4">BlaGe-Capa-PK</fullName>
    </alternativeName>
    <alternativeName>
        <fullName evidence="1">FXPRL-amide</fullName>
    </alternativeName>
</protein>
<feature type="peptide" id="PRO_0000378679" description="Pyrokinin-5" evidence="3">
    <location>
        <begin position="1"/>
        <end position="17"/>
    </location>
</feature>
<feature type="modified residue" description="Leucine amide" evidence="3">
    <location>
        <position position="17"/>
    </location>
</feature>
<name>PPK5_BLAGE</name>
<evidence type="ECO:0000250" key="1">
    <source>
        <dbReference type="UniProtKB" id="P82617"/>
    </source>
</evidence>
<evidence type="ECO:0000255" key="2"/>
<evidence type="ECO:0000269" key="3">
    <source>
    </source>
</evidence>
<evidence type="ECO:0000303" key="4">
    <source>
    </source>
</evidence>
<evidence type="ECO:0000305" key="5"/>
<keyword id="KW-0027">Amidation</keyword>
<keyword id="KW-0903">Direct protein sequencing</keyword>
<keyword id="KW-0527">Neuropeptide</keyword>
<keyword id="KW-0964">Secreted</keyword>
<comment type="function">
    <text evidence="1">Myoactive.</text>
</comment>
<comment type="subcellular location">
    <subcellularLocation>
        <location evidence="5">Secreted</location>
    </subcellularLocation>
</comment>
<comment type="similarity">
    <text evidence="2">Belongs to the pyrokinin family.</text>
</comment>
<dbReference type="GO" id="GO:0005576">
    <property type="term" value="C:extracellular region"/>
    <property type="evidence" value="ECO:0007669"/>
    <property type="project" value="UniProtKB-SubCell"/>
</dbReference>
<dbReference type="GO" id="GO:0005184">
    <property type="term" value="F:neuropeptide hormone activity"/>
    <property type="evidence" value="ECO:0007669"/>
    <property type="project" value="InterPro"/>
</dbReference>
<dbReference type="GO" id="GO:0007218">
    <property type="term" value="P:neuropeptide signaling pathway"/>
    <property type="evidence" value="ECO:0007669"/>
    <property type="project" value="UniProtKB-KW"/>
</dbReference>
<dbReference type="InterPro" id="IPR001484">
    <property type="entry name" value="Pyrokinin_CS"/>
</dbReference>
<dbReference type="PROSITE" id="PS00539">
    <property type="entry name" value="PYROKININ"/>
    <property type="match status" value="1"/>
</dbReference>
<organism>
    <name type="scientific">Blattella germanica</name>
    <name type="common">German cockroach</name>
    <name type="synonym">Blatta germanica</name>
    <dbReference type="NCBI Taxonomy" id="6973"/>
    <lineage>
        <taxon>Eukaryota</taxon>
        <taxon>Metazoa</taxon>
        <taxon>Ecdysozoa</taxon>
        <taxon>Arthropoda</taxon>
        <taxon>Hexapoda</taxon>
        <taxon>Insecta</taxon>
        <taxon>Pterygota</taxon>
        <taxon>Neoptera</taxon>
        <taxon>Polyneoptera</taxon>
        <taxon>Dictyoptera</taxon>
        <taxon>Blattodea</taxon>
        <taxon>Blaberoidea</taxon>
        <taxon>Blattellidae</taxon>
        <taxon>Blattella</taxon>
    </lineage>
</organism>
<proteinExistence type="evidence at protein level"/>
<reference evidence="5" key="1">
    <citation type="journal article" date="2009" name="BMC Evol. Biol.">
        <title>A proteomic approach for studying insect phylogeny: CAPA peptides of ancient insect taxa (Dictyoptera, Blattoptera) as a test case.</title>
        <authorList>
            <person name="Roth S."/>
            <person name="Fromm B."/>
            <person name="Gaede G."/>
            <person name="Predel R."/>
        </authorList>
    </citation>
    <scope>PROTEIN SEQUENCE</scope>
    <scope>AMIDATION AT LEU-17</scope>
</reference>
<accession>P85554</accession>
<sequence length="17" mass="1752">ESGGSGEANGMWFGPRL</sequence>